<organism>
    <name type="scientific">Shewanella baltica (strain OS195)</name>
    <dbReference type="NCBI Taxonomy" id="399599"/>
    <lineage>
        <taxon>Bacteria</taxon>
        <taxon>Pseudomonadati</taxon>
        <taxon>Pseudomonadota</taxon>
        <taxon>Gammaproteobacteria</taxon>
        <taxon>Alteromonadales</taxon>
        <taxon>Shewanellaceae</taxon>
        <taxon>Shewanella</taxon>
    </lineage>
</organism>
<comment type="catalytic activity">
    <reaction evidence="1">
        <text>tRNA(His) + L-histidine + ATP = L-histidyl-tRNA(His) + AMP + diphosphate + H(+)</text>
        <dbReference type="Rhea" id="RHEA:17313"/>
        <dbReference type="Rhea" id="RHEA-COMP:9665"/>
        <dbReference type="Rhea" id="RHEA-COMP:9689"/>
        <dbReference type="ChEBI" id="CHEBI:15378"/>
        <dbReference type="ChEBI" id="CHEBI:30616"/>
        <dbReference type="ChEBI" id="CHEBI:33019"/>
        <dbReference type="ChEBI" id="CHEBI:57595"/>
        <dbReference type="ChEBI" id="CHEBI:78442"/>
        <dbReference type="ChEBI" id="CHEBI:78527"/>
        <dbReference type="ChEBI" id="CHEBI:456215"/>
        <dbReference type="EC" id="6.1.1.21"/>
    </reaction>
</comment>
<comment type="subunit">
    <text evidence="1">Homodimer.</text>
</comment>
<comment type="subcellular location">
    <subcellularLocation>
        <location evidence="1">Cytoplasm</location>
    </subcellularLocation>
</comment>
<comment type="similarity">
    <text evidence="1">Belongs to the class-II aminoacyl-tRNA synthetase family.</text>
</comment>
<protein>
    <recommendedName>
        <fullName evidence="1">Histidine--tRNA ligase</fullName>
        <ecNumber evidence="1">6.1.1.21</ecNumber>
    </recommendedName>
    <alternativeName>
        <fullName evidence="1">Histidyl-tRNA synthetase</fullName>
        <shortName evidence="1">HisRS</shortName>
    </alternativeName>
</protein>
<accession>A9KXK7</accession>
<dbReference type="EC" id="6.1.1.21" evidence="1"/>
<dbReference type="EMBL" id="CP000891">
    <property type="protein sequence ID" value="ABX50309.1"/>
    <property type="molecule type" value="Genomic_DNA"/>
</dbReference>
<dbReference type="RefSeq" id="WP_006085680.1">
    <property type="nucleotide sequence ID" value="NC_009997.1"/>
</dbReference>
<dbReference type="SMR" id="A9KXK7"/>
<dbReference type="GeneID" id="11773203"/>
<dbReference type="KEGG" id="sbn:Sbal195_3147"/>
<dbReference type="HOGENOM" id="CLU_025113_1_1_6"/>
<dbReference type="Proteomes" id="UP000000770">
    <property type="component" value="Chromosome"/>
</dbReference>
<dbReference type="GO" id="GO:0005737">
    <property type="term" value="C:cytoplasm"/>
    <property type="evidence" value="ECO:0007669"/>
    <property type="project" value="UniProtKB-SubCell"/>
</dbReference>
<dbReference type="GO" id="GO:0005524">
    <property type="term" value="F:ATP binding"/>
    <property type="evidence" value="ECO:0007669"/>
    <property type="project" value="UniProtKB-UniRule"/>
</dbReference>
<dbReference type="GO" id="GO:0004821">
    <property type="term" value="F:histidine-tRNA ligase activity"/>
    <property type="evidence" value="ECO:0007669"/>
    <property type="project" value="UniProtKB-UniRule"/>
</dbReference>
<dbReference type="GO" id="GO:0006427">
    <property type="term" value="P:histidyl-tRNA aminoacylation"/>
    <property type="evidence" value="ECO:0007669"/>
    <property type="project" value="UniProtKB-UniRule"/>
</dbReference>
<dbReference type="CDD" id="cd00773">
    <property type="entry name" value="HisRS-like_core"/>
    <property type="match status" value="1"/>
</dbReference>
<dbReference type="CDD" id="cd00859">
    <property type="entry name" value="HisRS_anticodon"/>
    <property type="match status" value="1"/>
</dbReference>
<dbReference type="FunFam" id="3.30.930.10:FF:000005">
    <property type="entry name" value="Histidine--tRNA ligase"/>
    <property type="match status" value="1"/>
</dbReference>
<dbReference type="Gene3D" id="3.40.50.800">
    <property type="entry name" value="Anticodon-binding domain"/>
    <property type="match status" value="1"/>
</dbReference>
<dbReference type="Gene3D" id="3.30.930.10">
    <property type="entry name" value="Bira Bifunctional Protein, Domain 2"/>
    <property type="match status" value="1"/>
</dbReference>
<dbReference type="HAMAP" id="MF_00127">
    <property type="entry name" value="His_tRNA_synth"/>
    <property type="match status" value="1"/>
</dbReference>
<dbReference type="InterPro" id="IPR006195">
    <property type="entry name" value="aa-tRNA-synth_II"/>
</dbReference>
<dbReference type="InterPro" id="IPR045864">
    <property type="entry name" value="aa-tRNA-synth_II/BPL/LPL"/>
</dbReference>
<dbReference type="InterPro" id="IPR004154">
    <property type="entry name" value="Anticodon-bd"/>
</dbReference>
<dbReference type="InterPro" id="IPR036621">
    <property type="entry name" value="Anticodon-bd_dom_sf"/>
</dbReference>
<dbReference type="InterPro" id="IPR015807">
    <property type="entry name" value="His-tRNA-ligase"/>
</dbReference>
<dbReference type="InterPro" id="IPR041715">
    <property type="entry name" value="HisRS-like_core"/>
</dbReference>
<dbReference type="InterPro" id="IPR004516">
    <property type="entry name" value="HisRS/HisZ"/>
</dbReference>
<dbReference type="InterPro" id="IPR033656">
    <property type="entry name" value="HisRS_anticodon"/>
</dbReference>
<dbReference type="NCBIfam" id="TIGR00442">
    <property type="entry name" value="hisS"/>
    <property type="match status" value="1"/>
</dbReference>
<dbReference type="PANTHER" id="PTHR43707:SF1">
    <property type="entry name" value="HISTIDINE--TRNA LIGASE, MITOCHONDRIAL-RELATED"/>
    <property type="match status" value="1"/>
</dbReference>
<dbReference type="PANTHER" id="PTHR43707">
    <property type="entry name" value="HISTIDYL-TRNA SYNTHETASE"/>
    <property type="match status" value="1"/>
</dbReference>
<dbReference type="Pfam" id="PF03129">
    <property type="entry name" value="HGTP_anticodon"/>
    <property type="match status" value="1"/>
</dbReference>
<dbReference type="Pfam" id="PF13393">
    <property type="entry name" value="tRNA-synt_His"/>
    <property type="match status" value="1"/>
</dbReference>
<dbReference type="PIRSF" id="PIRSF001549">
    <property type="entry name" value="His-tRNA_synth"/>
    <property type="match status" value="1"/>
</dbReference>
<dbReference type="SUPFAM" id="SSF52954">
    <property type="entry name" value="Class II aaRS ABD-related"/>
    <property type="match status" value="1"/>
</dbReference>
<dbReference type="SUPFAM" id="SSF55681">
    <property type="entry name" value="Class II aaRS and biotin synthetases"/>
    <property type="match status" value="1"/>
</dbReference>
<dbReference type="PROSITE" id="PS50862">
    <property type="entry name" value="AA_TRNA_LIGASE_II"/>
    <property type="match status" value="1"/>
</dbReference>
<keyword id="KW-0030">Aminoacyl-tRNA synthetase</keyword>
<keyword id="KW-0067">ATP-binding</keyword>
<keyword id="KW-0963">Cytoplasm</keyword>
<keyword id="KW-0436">Ligase</keyword>
<keyword id="KW-0547">Nucleotide-binding</keyword>
<keyword id="KW-0648">Protein biosynthesis</keyword>
<reference key="1">
    <citation type="submission" date="2007-11" db="EMBL/GenBank/DDBJ databases">
        <title>Complete sequence of chromosome of Shewanella baltica OS195.</title>
        <authorList>
            <consortium name="US DOE Joint Genome Institute"/>
            <person name="Copeland A."/>
            <person name="Lucas S."/>
            <person name="Lapidus A."/>
            <person name="Barry K."/>
            <person name="Glavina del Rio T."/>
            <person name="Dalin E."/>
            <person name="Tice H."/>
            <person name="Pitluck S."/>
            <person name="Chain P."/>
            <person name="Malfatti S."/>
            <person name="Shin M."/>
            <person name="Vergez L."/>
            <person name="Schmutz J."/>
            <person name="Larimer F."/>
            <person name="Land M."/>
            <person name="Hauser L."/>
            <person name="Kyrpides N."/>
            <person name="Kim E."/>
            <person name="Brettar I."/>
            <person name="Rodrigues J."/>
            <person name="Konstantinidis K."/>
            <person name="Klappenbach J."/>
            <person name="Hofle M."/>
            <person name="Tiedje J."/>
            <person name="Richardson P."/>
        </authorList>
    </citation>
    <scope>NUCLEOTIDE SEQUENCE [LARGE SCALE GENOMIC DNA]</scope>
    <source>
        <strain>OS195</strain>
    </source>
</reference>
<sequence length="426" mass="47335">MAKQIQAIRGMNDILPTQSPLWQKMEAVLRSSVSAYGYSEIRTPIVENTDLFKRSIGEVTDIVEKEMYTFADNNGDSLTLRPEGTASTVRAGNENGLLYNQEQRLWYMGPMFRHERPQKGRYRQFNQFGVEVYGIGTADIDAEVLMLSARLWEKLGISDHVSLELNTLGDPAERAVYRDALIAFLEQHKDALDEDSKRRMYSNPLRVLDSKDQNVQAILAGAPELMDFLGEESKTHFSQLRELLDAVGIKYTINPRLVRGLDYYNRTVFEWVTSSLGSQGTVLAGGRYDGLVAQLGGKDTPAVGFAMGLERIVLLLETLELNKDIPSEVDVYVTAMGDSCLVEAIKIAQELRSALPNLKVMSHCGGGNVKKQMKRADKSGASVALLIGEDELAEGMVTVKHLRNDIEQQRVARSALGAFLAELAIK</sequence>
<evidence type="ECO:0000255" key="1">
    <source>
        <dbReference type="HAMAP-Rule" id="MF_00127"/>
    </source>
</evidence>
<proteinExistence type="inferred from homology"/>
<name>SYH_SHEB9</name>
<gene>
    <name evidence="1" type="primary">hisS</name>
    <name type="ordered locus">Sbal195_3147</name>
</gene>
<feature type="chain" id="PRO_1000076285" description="Histidine--tRNA ligase">
    <location>
        <begin position="1"/>
        <end position="426"/>
    </location>
</feature>